<accession>Q98993</accession>
<reference key="1">
    <citation type="journal article" date="1997" name="Biochim. Biophys. Acta">
        <title>Complete amino-acid sequence of the beta-subunit of VTX from venom of the stonefish (Synanceia verrucosa) as identified from cDNA cloning experiments.</title>
        <authorList>
            <person name="Garnier P."/>
            <person name="Ducancel F."/>
            <person name="Ogawa T."/>
            <person name="Boulain J.-C."/>
            <person name="Goudey-Perriere F."/>
            <person name="Perriere C."/>
            <person name="Menez A."/>
        </authorList>
    </citation>
    <scope>NUCLEOTIDE SEQUENCE [MRNA]</scope>
    <source>
        <tissue>Venom gland</tissue>
    </source>
</reference>
<reference key="2">
    <citation type="journal article" date="1995" name="Toxicon">
        <title>Enzymatic properties of the stonefish (Synanceia verrucosa Bloch and Schneider, 1801) venom and purification of a lethal, hypotensive and cytolytic factor.</title>
        <authorList>
            <person name="Garnier P."/>
            <person name="Goudey-Perriere F."/>
            <person name="Breton P."/>
            <person name="Dewulf C."/>
            <person name="Petek F."/>
            <person name="Perriere C."/>
        </authorList>
    </citation>
    <scope>FUNCTION</scope>
    <scope>SUBUNIT</scope>
    <source>
        <tissue>Venom</tissue>
    </source>
</reference>
<reference key="3">
    <citation type="journal article" date="1997" name="Toxicon">
        <title>Cardiotoxicity of verrucotoxin, a protein isolated from the venom of Synanceia verrucosa.</title>
        <authorList>
            <person name="Garnier P."/>
            <person name="Sauviat M.P."/>
            <person name="Goudey-Perriere F."/>
            <person name="Perriere C."/>
        </authorList>
    </citation>
    <scope>FUNCTION</scope>
    <source>
        <tissue>Venom</tissue>
    </source>
</reference>
<reference key="4">
    <citation type="journal article" date="2007" name="Br. J. Pharmacol.">
        <title>Verrucotoxin, a stonefish venom, modulates calcium channel activity in guinea-pig ventricular myocytes.</title>
        <authorList>
            <person name="Yazawa K."/>
            <person name="Wang J.-W."/>
            <person name="Hao L.-Y."/>
            <person name="Onoue Y."/>
            <person name="Kameyama M."/>
        </authorList>
    </citation>
    <scope>FUNCTION</scope>
</reference>
<evidence type="ECO:0000250" key="1"/>
<evidence type="ECO:0000255" key="2">
    <source>
        <dbReference type="PROSITE-ProRule" id="PRU00548"/>
    </source>
</evidence>
<evidence type="ECO:0000269" key="3">
    <source>
    </source>
</evidence>
<evidence type="ECO:0000269" key="4">
    <source>
    </source>
</evidence>
<evidence type="ECO:0000269" key="5">
    <source>
    </source>
</evidence>
<evidence type="ECO:0000305" key="6"/>
<sequence>MPSDILVVAALGRPFTLGMLYDARNDKLIPGFTLWEDEVIEESTVESSQPSSAFEIIASDSIDDKSSLMEIEASLKASFLGGLVEVGGSAKYLNNQKKFKNQSRVTLQYKATTNFKQLMTNLGTKHVEYSELFENIQATHVVIGILYGANAFFVFDSNKVDSTNVQEIQGQMEAVIKKIPSVEISGKASVQLTSEETDITNSFSCEFHGDFFLTSNPTTFEDAVKTYQQLPQMMGKDNAVPMTVWLVPMVNFYSEAPQLMADSSTPILRKVRNTLEAIVQVQMRCNDALDDPTVNLFTEVQKKLSDFQIICDDHMSKLQATIAKKLFAIRSGDEDESALVNLFEENLQSPFNTESLNMWMEFEEREINVLKSCMDILTKAKPKVIFNQGVLFKELYDSKVKHGLCYVFTNVTKNDDFLTVLNDFLDSPQSRPKKLRPSPKDYWYSYDDIPEMMREKAHLFRNLAKEMNNRCVHFFVTAINNPKQEGAGIHYYRESIQIIHEFTKPHMPGVETIKDRRELQWYDCELTLDTETAHQVLTLSEGNKRQCRGVRVTRRSLREFSHFQQVMCHQGAEWTPLLGVRVAGHVSAGVTYKGISRKTSTPDSSLGKNQKSWVFEYTKKSGYQQIHNGKNARVTVSSIGFKQLGVYLDWPAGTLSFYIGQQSLGDSSPHLPHQILRGCLSSLPDWGCTTESQWSN</sequence>
<organism>
    <name type="scientific">Synanceia verrucosa</name>
    <name type="common">Reef stonefish</name>
    <dbReference type="NCBI Taxonomy" id="51996"/>
    <lineage>
        <taxon>Eukaryota</taxon>
        <taxon>Metazoa</taxon>
        <taxon>Chordata</taxon>
        <taxon>Craniata</taxon>
        <taxon>Vertebrata</taxon>
        <taxon>Euteleostomi</taxon>
        <taxon>Actinopterygii</taxon>
        <taxon>Neopterygii</taxon>
        <taxon>Teleostei</taxon>
        <taxon>Neoteleostei</taxon>
        <taxon>Acanthomorphata</taxon>
        <taxon>Eupercaria</taxon>
        <taxon>Perciformes</taxon>
        <taxon>Scorpaenoidei</taxon>
        <taxon>Synanceiidae</taxon>
        <taxon>Synanceiinae</taxon>
        <taxon>Synanceia</taxon>
    </lineage>
</organism>
<comment type="function">
    <text evidence="3 4 5">This lethal (towards mice) toxin induces hemolytic, cytolytic and hypotensive activities. Inhibits calcium channels and may activate ATP-sensitive potassium channels in frog atrial heart muscle. In guinea-pig ventricular myocytes, it modulates calcium channel activity through the beta-adrenoceptor-cAMP-PKA pathway (ADRB).</text>
</comment>
<comment type="subunit">
    <text evidence="4">Tetramer composed of 2 alpha and 2 beta subunits.</text>
</comment>
<comment type="subcellular location">
    <subcellularLocation>
        <location>Secreted</location>
    </subcellularLocation>
    <text>However, no signal peptide has been found. This protein may follow a novel secretion pathway.</text>
</comment>
<comment type="tissue specificity">
    <text>Expressed by the venom gland.</text>
</comment>
<comment type="PTM">
    <text>Glycosylated.</text>
</comment>
<comment type="similarity">
    <text evidence="6">Belongs to the SNTX/VTX toxin family.</text>
</comment>
<comment type="sequence caution" evidence="6">
    <conflict type="erroneous initiation">
        <sequence resource="EMBL-CDS" id="CAA69254"/>
    </conflict>
    <text>Extended N-terminus.</text>
</comment>
<feature type="initiator methionine" description="Removed" evidence="1">
    <location>
        <position position="1"/>
    </location>
</feature>
<feature type="chain" id="PRO_0000221557" description="Verrucotoxin subunit beta">
    <location>
        <begin position="2"/>
        <end position="696"/>
    </location>
</feature>
<feature type="domain" description="B30.2/SPRY" evidence="2">
    <location>
        <begin position="506"/>
        <end position="696"/>
    </location>
</feature>
<keyword id="KW-0108">Calcium channel impairing toxin</keyword>
<keyword id="KW-0204">Cytolysis</keyword>
<keyword id="KW-1213">G-protein coupled receptor impairing toxin</keyword>
<keyword id="KW-0325">Glycoprotein</keyword>
<keyword id="KW-0354">Hemolysis</keyword>
<keyword id="KW-0872">Ion channel impairing toxin</keyword>
<keyword id="KW-0528">Neurotoxin</keyword>
<keyword id="KW-0632">Potassium channel impairing toxin</keyword>
<keyword id="KW-0964">Secreted</keyword>
<keyword id="KW-0800">Toxin</keyword>
<name>VTXB_SYNVE</name>
<dbReference type="EMBL" id="Y07957">
    <property type="protein sequence ID" value="CAA69254.1"/>
    <property type="status" value="ALT_INIT"/>
    <property type="molecule type" value="mRNA"/>
</dbReference>
<dbReference type="SMR" id="Q98993"/>
<dbReference type="GO" id="GO:0005576">
    <property type="term" value="C:extracellular region"/>
    <property type="evidence" value="ECO:0007669"/>
    <property type="project" value="UniProtKB-SubCell"/>
</dbReference>
<dbReference type="GO" id="GO:0005246">
    <property type="term" value="F:calcium channel regulator activity"/>
    <property type="evidence" value="ECO:0007669"/>
    <property type="project" value="UniProtKB-KW"/>
</dbReference>
<dbReference type="GO" id="GO:0015459">
    <property type="term" value="F:potassium channel regulator activity"/>
    <property type="evidence" value="ECO:0007669"/>
    <property type="project" value="UniProtKB-KW"/>
</dbReference>
<dbReference type="GO" id="GO:0090729">
    <property type="term" value="F:toxin activity"/>
    <property type="evidence" value="ECO:0007669"/>
    <property type="project" value="UniProtKB-KW"/>
</dbReference>
<dbReference type="GO" id="GO:0031640">
    <property type="term" value="P:killing of cells of another organism"/>
    <property type="evidence" value="ECO:0007669"/>
    <property type="project" value="UniProtKB-KW"/>
</dbReference>
<dbReference type="Gene3D" id="2.60.120.920">
    <property type="match status" value="1"/>
</dbReference>
<dbReference type="InterPro" id="IPR001870">
    <property type="entry name" value="B30.2/SPRY"/>
</dbReference>
<dbReference type="InterPro" id="IPR043136">
    <property type="entry name" value="B30.2/SPRY_sf"/>
</dbReference>
<dbReference type="InterPro" id="IPR013320">
    <property type="entry name" value="ConA-like_dom_sf"/>
</dbReference>
<dbReference type="InterPro" id="IPR052090">
    <property type="entry name" value="Cytolytic_pore-forming_toxin"/>
</dbReference>
<dbReference type="InterPro" id="IPR006574">
    <property type="entry name" value="PRY"/>
</dbReference>
<dbReference type="InterPro" id="IPR056072">
    <property type="entry name" value="SNTX_MACPF/CDC-like_dom"/>
</dbReference>
<dbReference type="InterPro" id="IPR003877">
    <property type="entry name" value="SPRY_dom"/>
</dbReference>
<dbReference type="InterPro" id="IPR048997">
    <property type="entry name" value="Stonustoxin-like_helical"/>
</dbReference>
<dbReference type="InterPro" id="IPR040581">
    <property type="entry name" value="Thioredoxin_11"/>
</dbReference>
<dbReference type="PANTHER" id="PTHR31594">
    <property type="entry name" value="AIG1-TYPE G DOMAIN-CONTAINING PROTEIN"/>
    <property type="match status" value="1"/>
</dbReference>
<dbReference type="PANTHER" id="PTHR31594:SF16">
    <property type="entry name" value="SI:CH211-281L24.3"/>
    <property type="match status" value="1"/>
</dbReference>
<dbReference type="Pfam" id="PF24674">
    <property type="entry name" value="MACPF_SNTX"/>
    <property type="match status" value="1"/>
</dbReference>
<dbReference type="Pfam" id="PF00622">
    <property type="entry name" value="SPRY"/>
    <property type="match status" value="1"/>
</dbReference>
<dbReference type="Pfam" id="PF21109">
    <property type="entry name" value="Stonustoxin_helical"/>
    <property type="match status" value="1"/>
</dbReference>
<dbReference type="Pfam" id="PF18078">
    <property type="entry name" value="Thioredoxin_11"/>
    <property type="match status" value="1"/>
</dbReference>
<dbReference type="SMART" id="SM00589">
    <property type="entry name" value="PRY"/>
    <property type="match status" value="1"/>
</dbReference>
<dbReference type="SMART" id="SM00449">
    <property type="entry name" value="SPRY"/>
    <property type="match status" value="1"/>
</dbReference>
<dbReference type="SUPFAM" id="SSF49899">
    <property type="entry name" value="Concanavalin A-like lectins/glucanases"/>
    <property type="match status" value="1"/>
</dbReference>
<dbReference type="PROSITE" id="PS50188">
    <property type="entry name" value="B302_SPRY"/>
    <property type="match status" value="1"/>
</dbReference>
<proteinExistence type="evidence at protein level"/>
<protein>
    <recommendedName>
        <fullName>Verrucotoxin subunit beta</fullName>
        <shortName>VTX subunit beta</shortName>
    </recommendedName>
</protein>